<gene>
    <name evidence="1" type="primary">lpxC</name>
    <name type="ordered locus">XOO3598</name>
</gene>
<organism>
    <name type="scientific">Xanthomonas oryzae pv. oryzae (strain MAFF 311018)</name>
    <dbReference type="NCBI Taxonomy" id="342109"/>
    <lineage>
        <taxon>Bacteria</taxon>
        <taxon>Pseudomonadati</taxon>
        <taxon>Pseudomonadota</taxon>
        <taxon>Gammaproteobacteria</taxon>
        <taxon>Lysobacterales</taxon>
        <taxon>Lysobacteraceae</taxon>
        <taxon>Xanthomonas</taxon>
    </lineage>
</organism>
<name>LPXC_XANOM</name>
<accession>Q2NZC4</accession>
<protein>
    <recommendedName>
        <fullName evidence="1">UDP-3-O-acyl-N-acetylglucosamine deacetylase</fullName>
        <shortName evidence="1">UDP-3-O-acyl-GlcNAc deacetylase</shortName>
        <ecNumber evidence="1">3.5.1.108</ecNumber>
    </recommendedName>
    <alternativeName>
        <fullName evidence="1">UDP-3-O-[R-3-hydroxymyristoyl]-N-acetylglucosamine deacetylase</fullName>
    </alternativeName>
</protein>
<evidence type="ECO:0000255" key="1">
    <source>
        <dbReference type="HAMAP-Rule" id="MF_00388"/>
    </source>
</evidence>
<comment type="function">
    <text evidence="1">Catalyzes the hydrolysis of UDP-3-O-myristoyl-N-acetylglucosamine to form UDP-3-O-myristoylglucosamine and acetate, the committed step in lipid A biosynthesis.</text>
</comment>
<comment type="catalytic activity">
    <reaction evidence="1">
        <text>a UDP-3-O-[(3R)-3-hydroxyacyl]-N-acetyl-alpha-D-glucosamine + H2O = a UDP-3-O-[(3R)-3-hydroxyacyl]-alpha-D-glucosamine + acetate</text>
        <dbReference type="Rhea" id="RHEA:67816"/>
        <dbReference type="ChEBI" id="CHEBI:15377"/>
        <dbReference type="ChEBI" id="CHEBI:30089"/>
        <dbReference type="ChEBI" id="CHEBI:137740"/>
        <dbReference type="ChEBI" id="CHEBI:173225"/>
        <dbReference type="EC" id="3.5.1.108"/>
    </reaction>
</comment>
<comment type="cofactor">
    <cofactor evidence="1">
        <name>Zn(2+)</name>
        <dbReference type="ChEBI" id="CHEBI:29105"/>
    </cofactor>
</comment>
<comment type="pathway">
    <text evidence="1">Glycolipid biosynthesis; lipid IV(A) biosynthesis; lipid IV(A) from (3R)-3-hydroxytetradecanoyl-[acyl-carrier-protein] and UDP-N-acetyl-alpha-D-glucosamine: step 2/6.</text>
</comment>
<comment type="similarity">
    <text evidence="1">Belongs to the LpxC family.</text>
</comment>
<feature type="chain" id="PRO_0000253704" description="UDP-3-O-acyl-N-acetylglucosamine deacetylase">
    <location>
        <begin position="1"/>
        <end position="303"/>
    </location>
</feature>
<feature type="active site" description="Proton donor" evidence="1">
    <location>
        <position position="264"/>
    </location>
</feature>
<feature type="binding site" evidence="1">
    <location>
        <position position="78"/>
    </location>
    <ligand>
        <name>Zn(2+)</name>
        <dbReference type="ChEBI" id="CHEBI:29105"/>
    </ligand>
</feature>
<feature type="binding site" evidence="1">
    <location>
        <position position="237"/>
    </location>
    <ligand>
        <name>Zn(2+)</name>
        <dbReference type="ChEBI" id="CHEBI:29105"/>
    </ligand>
</feature>
<feature type="binding site" evidence="1">
    <location>
        <position position="241"/>
    </location>
    <ligand>
        <name>Zn(2+)</name>
        <dbReference type="ChEBI" id="CHEBI:29105"/>
    </ligand>
</feature>
<proteinExistence type="inferred from homology"/>
<dbReference type="EC" id="3.5.1.108" evidence="1"/>
<dbReference type="EMBL" id="AP008229">
    <property type="protein sequence ID" value="BAE70353.1"/>
    <property type="molecule type" value="Genomic_DNA"/>
</dbReference>
<dbReference type="RefSeq" id="WP_011260225.1">
    <property type="nucleotide sequence ID" value="NC_007705.1"/>
</dbReference>
<dbReference type="SMR" id="Q2NZC4"/>
<dbReference type="KEGG" id="xom:XOO3598"/>
<dbReference type="HOGENOM" id="CLU_046528_1_0_6"/>
<dbReference type="UniPathway" id="UPA00359">
    <property type="reaction ID" value="UER00478"/>
</dbReference>
<dbReference type="GO" id="GO:0016020">
    <property type="term" value="C:membrane"/>
    <property type="evidence" value="ECO:0007669"/>
    <property type="project" value="GOC"/>
</dbReference>
<dbReference type="GO" id="GO:0046872">
    <property type="term" value="F:metal ion binding"/>
    <property type="evidence" value="ECO:0007669"/>
    <property type="project" value="UniProtKB-KW"/>
</dbReference>
<dbReference type="GO" id="GO:0103117">
    <property type="term" value="F:UDP-3-O-acyl-N-acetylglucosamine deacetylase activity"/>
    <property type="evidence" value="ECO:0007669"/>
    <property type="project" value="UniProtKB-UniRule"/>
</dbReference>
<dbReference type="GO" id="GO:0009245">
    <property type="term" value="P:lipid A biosynthetic process"/>
    <property type="evidence" value="ECO:0007669"/>
    <property type="project" value="UniProtKB-UniRule"/>
</dbReference>
<dbReference type="Gene3D" id="3.30.230.20">
    <property type="entry name" value="lpxc deacetylase, domain 1"/>
    <property type="match status" value="1"/>
</dbReference>
<dbReference type="Gene3D" id="3.30.1700.10">
    <property type="entry name" value="lpxc deacetylase, domain 2"/>
    <property type="match status" value="1"/>
</dbReference>
<dbReference type="HAMAP" id="MF_00388">
    <property type="entry name" value="LpxC"/>
    <property type="match status" value="1"/>
</dbReference>
<dbReference type="InterPro" id="IPR020568">
    <property type="entry name" value="Ribosomal_Su5_D2-typ_SF"/>
</dbReference>
<dbReference type="InterPro" id="IPR004463">
    <property type="entry name" value="UDP-acyl_GlcNac_deAcase"/>
</dbReference>
<dbReference type="InterPro" id="IPR011334">
    <property type="entry name" value="UDP-acyl_GlcNac_deAcase_C"/>
</dbReference>
<dbReference type="InterPro" id="IPR015870">
    <property type="entry name" value="UDP-acyl_N-AcGlcN_deAcase_N"/>
</dbReference>
<dbReference type="NCBIfam" id="TIGR00325">
    <property type="entry name" value="lpxC"/>
    <property type="match status" value="1"/>
</dbReference>
<dbReference type="PANTHER" id="PTHR33694">
    <property type="entry name" value="UDP-3-O-ACYL-N-ACETYLGLUCOSAMINE DEACETYLASE 1, MITOCHONDRIAL-RELATED"/>
    <property type="match status" value="1"/>
</dbReference>
<dbReference type="PANTHER" id="PTHR33694:SF1">
    <property type="entry name" value="UDP-3-O-ACYL-N-ACETYLGLUCOSAMINE DEACETYLASE 1, MITOCHONDRIAL-RELATED"/>
    <property type="match status" value="1"/>
</dbReference>
<dbReference type="Pfam" id="PF03331">
    <property type="entry name" value="LpxC"/>
    <property type="match status" value="1"/>
</dbReference>
<dbReference type="SUPFAM" id="SSF54211">
    <property type="entry name" value="Ribosomal protein S5 domain 2-like"/>
    <property type="match status" value="2"/>
</dbReference>
<reference key="1">
    <citation type="journal article" date="2005" name="Jpn. Agric. Res. Q.">
        <title>Genome sequence of Xanthomonas oryzae pv. oryzae suggests contribution of large numbers of effector genes and insertion sequences to its race diversity.</title>
        <authorList>
            <person name="Ochiai H."/>
            <person name="Inoue Y."/>
            <person name="Takeya M."/>
            <person name="Sasaki A."/>
            <person name="Kaku H."/>
        </authorList>
    </citation>
    <scope>NUCLEOTIDE SEQUENCE [LARGE SCALE GENOMIC DNA]</scope>
    <source>
        <strain>MAFF 311018</strain>
    </source>
</reference>
<sequence>MTQQRTLKNTIRATGVGLHSGDKVYMTLRPAPVDHGVVFRRVDLEPIVEVPADAELVTETTLCTGLSCNGAKIQTVEHLMSALAGLGVDNVIVELSSAELPIMDGSSGPFVFLLQSAGIVEQSKPKRFIRIKQTVEVRDGDKVARFEPYEGYKLGFTIEFNHPMIPAKQSRQEIDFSTSAYVTEISRARTFGFMRDLEYMRERNLGLGGSMDNAIVLDEFRVLNEDGLRYTNEFVRHKILDAIGDLYLAGGAILGAYEGFKSGHALNNKLVRALLADQAAWEWVSFPEGTEQPPVTYASPVYA</sequence>
<keyword id="KW-0378">Hydrolase</keyword>
<keyword id="KW-0441">Lipid A biosynthesis</keyword>
<keyword id="KW-0444">Lipid biosynthesis</keyword>
<keyword id="KW-0443">Lipid metabolism</keyword>
<keyword id="KW-0479">Metal-binding</keyword>
<keyword id="KW-0862">Zinc</keyword>